<reference key="1">
    <citation type="submission" date="2004-04" db="EMBL/GenBank/DDBJ databases">
        <authorList>
            <consortium name="NIH - Xenopus Gene Collection (XGC) project"/>
        </authorList>
    </citation>
    <scope>NUCLEOTIDE SEQUENCE [LARGE SCALE MRNA]</scope>
    <source>
        <tissue>Ovary</tissue>
    </source>
</reference>
<gene>
    <name type="primary">cnfn-a</name>
</gene>
<feature type="chain" id="PRO_0000261198" description="Cornifelin homolog A">
    <location>
        <begin position="1"/>
        <end position="111"/>
    </location>
</feature>
<proteinExistence type="inferred from homology"/>
<name>CNFNA_XENLA</name>
<organism>
    <name type="scientific">Xenopus laevis</name>
    <name type="common">African clawed frog</name>
    <dbReference type="NCBI Taxonomy" id="8355"/>
    <lineage>
        <taxon>Eukaryota</taxon>
        <taxon>Metazoa</taxon>
        <taxon>Chordata</taxon>
        <taxon>Craniata</taxon>
        <taxon>Vertebrata</taxon>
        <taxon>Euteleostomi</taxon>
        <taxon>Amphibia</taxon>
        <taxon>Batrachia</taxon>
        <taxon>Anura</taxon>
        <taxon>Pipoidea</taxon>
        <taxon>Pipidae</taxon>
        <taxon>Xenopodinae</taxon>
        <taxon>Xenopus</taxon>
        <taxon>Xenopus</taxon>
    </lineage>
</organism>
<protein>
    <recommendedName>
        <fullName>Cornifelin homolog A</fullName>
    </recommendedName>
</protein>
<accession>Q6NUC1</accession>
<dbReference type="EMBL" id="BC068675">
    <property type="protein sequence ID" value="AAH68675.1"/>
    <property type="molecule type" value="mRNA"/>
</dbReference>
<dbReference type="RefSeq" id="NP_001084700.1">
    <property type="nucleotide sequence ID" value="NM_001091231.1"/>
</dbReference>
<dbReference type="DNASU" id="414661"/>
<dbReference type="GeneID" id="414661"/>
<dbReference type="KEGG" id="xla:414661"/>
<dbReference type="AGR" id="Xenbase:XB-GENE-6079148"/>
<dbReference type="CTD" id="414661"/>
<dbReference type="Xenbase" id="XB-GENE-6079148">
    <property type="gene designation" value="cnfn.L"/>
</dbReference>
<dbReference type="OrthoDB" id="1045822at2759"/>
<dbReference type="Proteomes" id="UP000186698">
    <property type="component" value="Chromosome 7L"/>
</dbReference>
<dbReference type="Bgee" id="414661">
    <property type="expression patterns" value="Expressed in stomach and 20 other cell types or tissues"/>
</dbReference>
<dbReference type="InterPro" id="IPR006461">
    <property type="entry name" value="PLAC_motif_containing"/>
</dbReference>
<dbReference type="NCBIfam" id="TIGR01571">
    <property type="entry name" value="A_thal_Cys_rich"/>
    <property type="match status" value="1"/>
</dbReference>
<dbReference type="PANTHER" id="PTHR15907">
    <property type="entry name" value="DUF614 FAMILY PROTEIN-RELATED"/>
    <property type="match status" value="1"/>
</dbReference>
<dbReference type="Pfam" id="PF04749">
    <property type="entry name" value="PLAC8"/>
    <property type="match status" value="1"/>
</dbReference>
<sequence length="111" mass="12230">MSYPISAQPQGVQGYMTSNSSQWNSDVFDCCEDMGVCLCGTFVPCILACKVSQDFGECCCLPCLFGSILAVRTGIRERYHIEGSICKDWVCLSFCGPCALCQMARELKTRN</sequence>
<evidence type="ECO:0000305" key="1"/>
<comment type="similarity">
    <text evidence="1">Belongs to the cornifelin family.</text>
</comment>
<keyword id="KW-1185">Reference proteome</keyword>